<protein>
    <recommendedName>
        <fullName evidence="1">ATP synthase subunit alpha</fullName>
        <ecNumber evidence="1">7.1.2.2</ecNumber>
    </recommendedName>
    <alternativeName>
        <fullName evidence="1">ATP synthase F1 sector subunit alpha</fullName>
    </alternativeName>
    <alternativeName>
        <fullName evidence="1">F-ATPase subunit alpha</fullName>
    </alternativeName>
</protein>
<reference key="1">
    <citation type="journal article" date="2006" name="Appl. Environ. Microbiol.">
        <title>Genome sequence of the chemolithoautotrophic nitrite-oxidizing bacterium Nitrobacter winogradskyi Nb-255.</title>
        <authorList>
            <person name="Starkenburg S.R."/>
            <person name="Chain P.S.G."/>
            <person name="Sayavedra-Soto L.A."/>
            <person name="Hauser L."/>
            <person name="Land M.L."/>
            <person name="Larimer F.W."/>
            <person name="Malfatti S.A."/>
            <person name="Klotz M.G."/>
            <person name="Bottomley P.J."/>
            <person name="Arp D.J."/>
            <person name="Hickey W.J."/>
        </authorList>
    </citation>
    <scope>NUCLEOTIDE SEQUENCE [LARGE SCALE GENOMIC DNA]</scope>
    <source>
        <strain>ATCC 25391 / DSM 10237 / CIP 104748 / NCIMB 11846 / Nb-255</strain>
    </source>
</reference>
<name>ATPA_NITWN</name>
<proteinExistence type="inferred from homology"/>
<keyword id="KW-0066">ATP synthesis</keyword>
<keyword id="KW-0067">ATP-binding</keyword>
<keyword id="KW-0997">Cell inner membrane</keyword>
<keyword id="KW-1003">Cell membrane</keyword>
<keyword id="KW-0139">CF(1)</keyword>
<keyword id="KW-0375">Hydrogen ion transport</keyword>
<keyword id="KW-0406">Ion transport</keyword>
<keyword id="KW-0472">Membrane</keyword>
<keyword id="KW-0547">Nucleotide-binding</keyword>
<keyword id="KW-1185">Reference proteome</keyword>
<keyword id="KW-1278">Translocase</keyword>
<keyword id="KW-0813">Transport</keyword>
<comment type="function">
    <text evidence="1">Produces ATP from ADP in the presence of a proton gradient across the membrane. The alpha chain is a regulatory subunit.</text>
</comment>
<comment type="catalytic activity">
    <reaction evidence="1">
        <text>ATP + H2O + 4 H(+)(in) = ADP + phosphate + 5 H(+)(out)</text>
        <dbReference type="Rhea" id="RHEA:57720"/>
        <dbReference type="ChEBI" id="CHEBI:15377"/>
        <dbReference type="ChEBI" id="CHEBI:15378"/>
        <dbReference type="ChEBI" id="CHEBI:30616"/>
        <dbReference type="ChEBI" id="CHEBI:43474"/>
        <dbReference type="ChEBI" id="CHEBI:456216"/>
        <dbReference type="EC" id="7.1.2.2"/>
    </reaction>
</comment>
<comment type="subunit">
    <text evidence="1">F-type ATPases have 2 components, CF(1) - the catalytic core - and CF(0) - the membrane proton channel. CF(1) has five subunits: alpha(3), beta(3), gamma(1), delta(1), epsilon(1). CF(0) has three main subunits: a(1), b(2) and c(9-12). The alpha and beta chains form an alternating ring which encloses part of the gamma chain. CF(1) is attached to CF(0) by a central stalk formed by the gamma and epsilon chains, while a peripheral stalk is formed by the delta and b chains.</text>
</comment>
<comment type="subcellular location">
    <subcellularLocation>
        <location evidence="1">Cell inner membrane</location>
        <topology evidence="1">Peripheral membrane protein</topology>
    </subcellularLocation>
</comment>
<comment type="similarity">
    <text evidence="1">Belongs to the ATPase alpha/beta chains family.</text>
</comment>
<sequence length="510" mass="55182">MDIRAAEISAILKDQIKNFGKEAEVSEVGQVLSVGDGIARVYGLDNIQAGEMVEFENGTRGMALNLETDNVGIVIFGADREIKEGQTVKRTRAIVDAPVGKGLLGRVVDALGNPIDGKGPIQGAERKRVDVKAPGIIPRKSVHEPMATGLKAIDALIPIGRGQRELIIGDRQTGKTAIALDTILNQKPLNVAGAPESQKLYCVYVAVGQKRSTVAQFVKVLEEQGALEYSIVVAATASDPAPMQYLAPFTGCTMGEYFRDNAMHAVIIYDDLSKQAVAYRQMSLLLRRPPGREAYPGDVFYLHSRLLERAAKLNDSQGNGSLTALPVIETQANDVSAYIPTNVISITDGQIFLETDLFFQGIRPAVNVGLSVSRVGSSAQTKAMKKVAGKIKGELAQYREMAAFAQFGSDLDASTQRLLNRGSRLTELLKQPQFSPLKMEEQVVVIWAGTNGYLDPLPLGKVRAFEDGLLSLLRGQHADILNTIRDTRDLSDETAGKLKSIVEGYAKTFA</sequence>
<organism>
    <name type="scientific">Nitrobacter winogradskyi (strain ATCC 25391 / DSM 10237 / CIP 104748 / NCIMB 11846 / Nb-255)</name>
    <dbReference type="NCBI Taxonomy" id="323098"/>
    <lineage>
        <taxon>Bacteria</taxon>
        <taxon>Pseudomonadati</taxon>
        <taxon>Pseudomonadota</taxon>
        <taxon>Alphaproteobacteria</taxon>
        <taxon>Hyphomicrobiales</taxon>
        <taxon>Nitrobacteraceae</taxon>
        <taxon>Nitrobacter</taxon>
    </lineage>
</organism>
<dbReference type="EC" id="7.1.2.2" evidence="1"/>
<dbReference type="EMBL" id="CP000115">
    <property type="protein sequence ID" value="ABA03697.1"/>
    <property type="molecule type" value="Genomic_DNA"/>
</dbReference>
<dbReference type="RefSeq" id="WP_011313761.1">
    <property type="nucleotide sequence ID" value="NC_007406.1"/>
</dbReference>
<dbReference type="SMR" id="Q3SVJ4"/>
<dbReference type="STRING" id="323098.Nwi_0430"/>
<dbReference type="KEGG" id="nwi:Nwi_0430"/>
<dbReference type="eggNOG" id="COG0056">
    <property type="taxonomic scope" value="Bacteria"/>
</dbReference>
<dbReference type="HOGENOM" id="CLU_010091_2_1_5"/>
<dbReference type="OrthoDB" id="9803053at2"/>
<dbReference type="Proteomes" id="UP000002531">
    <property type="component" value="Chromosome"/>
</dbReference>
<dbReference type="GO" id="GO:0005886">
    <property type="term" value="C:plasma membrane"/>
    <property type="evidence" value="ECO:0007669"/>
    <property type="project" value="UniProtKB-SubCell"/>
</dbReference>
<dbReference type="GO" id="GO:0045259">
    <property type="term" value="C:proton-transporting ATP synthase complex"/>
    <property type="evidence" value="ECO:0007669"/>
    <property type="project" value="UniProtKB-KW"/>
</dbReference>
<dbReference type="GO" id="GO:0043531">
    <property type="term" value="F:ADP binding"/>
    <property type="evidence" value="ECO:0007669"/>
    <property type="project" value="TreeGrafter"/>
</dbReference>
<dbReference type="GO" id="GO:0005524">
    <property type="term" value="F:ATP binding"/>
    <property type="evidence" value="ECO:0007669"/>
    <property type="project" value="UniProtKB-UniRule"/>
</dbReference>
<dbReference type="GO" id="GO:0046933">
    <property type="term" value="F:proton-transporting ATP synthase activity, rotational mechanism"/>
    <property type="evidence" value="ECO:0007669"/>
    <property type="project" value="UniProtKB-UniRule"/>
</dbReference>
<dbReference type="CDD" id="cd18113">
    <property type="entry name" value="ATP-synt_F1_alpha_C"/>
    <property type="match status" value="1"/>
</dbReference>
<dbReference type="CDD" id="cd18116">
    <property type="entry name" value="ATP-synt_F1_alpha_N"/>
    <property type="match status" value="1"/>
</dbReference>
<dbReference type="CDD" id="cd01132">
    <property type="entry name" value="F1-ATPase_alpha_CD"/>
    <property type="match status" value="1"/>
</dbReference>
<dbReference type="FunFam" id="1.20.150.20:FF:000001">
    <property type="entry name" value="ATP synthase subunit alpha"/>
    <property type="match status" value="1"/>
</dbReference>
<dbReference type="FunFam" id="2.40.30.20:FF:000001">
    <property type="entry name" value="ATP synthase subunit alpha"/>
    <property type="match status" value="1"/>
</dbReference>
<dbReference type="FunFam" id="3.40.50.300:FF:002432">
    <property type="entry name" value="ATP synthase subunit alpha, mitochondrial"/>
    <property type="match status" value="1"/>
</dbReference>
<dbReference type="Gene3D" id="2.40.30.20">
    <property type="match status" value="1"/>
</dbReference>
<dbReference type="Gene3D" id="1.20.150.20">
    <property type="entry name" value="ATP synthase alpha/beta chain, C-terminal domain"/>
    <property type="match status" value="1"/>
</dbReference>
<dbReference type="Gene3D" id="3.40.50.300">
    <property type="entry name" value="P-loop containing nucleotide triphosphate hydrolases"/>
    <property type="match status" value="1"/>
</dbReference>
<dbReference type="HAMAP" id="MF_01346">
    <property type="entry name" value="ATP_synth_alpha_bact"/>
    <property type="match status" value="1"/>
</dbReference>
<dbReference type="InterPro" id="IPR023366">
    <property type="entry name" value="ATP_synth_asu-like_sf"/>
</dbReference>
<dbReference type="InterPro" id="IPR000793">
    <property type="entry name" value="ATP_synth_asu_C"/>
</dbReference>
<dbReference type="InterPro" id="IPR038376">
    <property type="entry name" value="ATP_synth_asu_C_sf"/>
</dbReference>
<dbReference type="InterPro" id="IPR033732">
    <property type="entry name" value="ATP_synth_F1_a_nt-bd_dom"/>
</dbReference>
<dbReference type="InterPro" id="IPR005294">
    <property type="entry name" value="ATP_synth_F1_asu"/>
</dbReference>
<dbReference type="InterPro" id="IPR020003">
    <property type="entry name" value="ATPase_a/bsu_AS"/>
</dbReference>
<dbReference type="InterPro" id="IPR004100">
    <property type="entry name" value="ATPase_F1/V1/A1_a/bsu_N"/>
</dbReference>
<dbReference type="InterPro" id="IPR036121">
    <property type="entry name" value="ATPase_F1/V1/A1_a/bsu_N_sf"/>
</dbReference>
<dbReference type="InterPro" id="IPR000194">
    <property type="entry name" value="ATPase_F1/V1/A1_a/bsu_nucl-bd"/>
</dbReference>
<dbReference type="InterPro" id="IPR027417">
    <property type="entry name" value="P-loop_NTPase"/>
</dbReference>
<dbReference type="NCBIfam" id="TIGR00962">
    <property type="entry name" value="atpA"/>
    <property type="match status" value="1"/>
</dbReference>
<dbReference type="NCBIfam" id="NF009884">
    <property type="entry name" value="PRK13343.1"/>
    <property type="match status" value="1"/>
</dbReference>
<dbReference type="PANTHER" id="PTHR48082">
    <property type="entry name" value="ATP SYNTHASE SUBUNIT ALPHA, MITOCHONDRIAL"/>
    <property type="match status" value="1"/>
</dbReference>
<dbReference type="PANTHER" id="PTHR48082:SF2">
    <property type="entry name" value="ATP SYNTHASE SUBUNIT ALPHA, MITOCHONDRIAL"/>
    <property type="match status" value="1"/>
</dbReference>
<dbReference type="Pfam" id="PF00006">
    <property type="entry name" value="ATP-synt_ab"/>
    <property type="match status" value="1"/>
</dbReference>
<dbReference type="Pfam" id="PF00306">
    <property type="entry name" value="ATP-synt_ab_C"/>
    <property type="match status" value="1"/>
</dbReference>
<dbReference type="Pfam" id="PF02874">
    <property type="entry name" value="ATP-synt_ab_N"/>
    <property type="match status" value="1"/>
</dbReference>
<dbReference type="PIRSF" id="PIRSF039088">
    <property type="entry name" value="F_ATPase_subunit_alpha"/>
    <property type="match status" value="1"/>
</dbReference>
<dbReference type="SUPFAM" id="SSF47917">
    <property type="entry name" value="C-terminal domain of alpha and beta subunits of F1 ATP synthase"/>
    <property type="match status" value="1"/>
</dbReference>
<dbReference type="SUPFAM" id="SSF50615">
    <property type="entry name" value="N-terminal domain of alpha and beta subunits of F1 ATP synthase"/>
    <property type="match status" value="1"/>
</dbReference>
<dbReference type="SUPFAM" id="SSF52540">
    <property type="entry name" value="P-loop containing nucleoside triphosphate hydrolases"/>
    <property type="match status" value="1"/>
</dbReference>
<dbReference type="PROSITE" id="PS00152">
    <property type="entry name" value="ATPASE_ALPHA_BETA"/>
    <property type="match status" value="1"/>
</dbReference>
<accession>Q3SVJ4</accession>
<gene>
    <name evidence="1" type="primary">atpA</name>
    <name type="ordered locus">Nwi_0430</name>
</gene>
<evidence type="ECO:0000255" key="1">
    <source>
        <dbReference type="HAMAP-Rule" id="MF_01346"/>
    </source>
</evidence>
<feature type="chain" id="PRO_0000238303" description="ATP synthase subunit alpha">
    <location>
        <begin position="1"/>
        <end position="510"/>
    </location>
</feature>
<feature type="binding site" evidence="1">
    <location>
        <begin position="169"/>
        <end position="176"/>
    </location>
    <ligand>
        <name>ATP</name>
        <dbReference type="ChEBI" id="CHEBI:30616"/>
    </ligand>
</feature>
<feature type="site" description="Required for activity" evidence="1">
    <location>
        <position position="371"/>
    </location>
</feature>